<name>RL24_COXBN</name>
<feature type="chain" id="PRO_0000355670" description="Large ribosomal subunit protein uL24">
    <location>
        <begin position="1"/>
        <end position="107"/>
    </location>
</feature>
<evidence type="ECO:0000255" key="1">
    <source>
        <dbReference type="HAMAP-Rule" id="MF_01326"/>
    </source>
</evidence>
<evidence type="ECO:0000305" key="2"/>
<sequence length="107" mass="11791">MAIKKIKKDDTVIVITGRDKGRQGKVLKVLPNSRLLVEGINLVKKHVKPNPNKNEQGGILERELSIHVSNVAIYNPAAKKADRVGIKTLEDGSKVRIFKSNGEVIDV</sequence>
<keyword id="KW-0687">Ribonucleoprotein</keyword>
<keyword id="KW-0689">Ribosomal protein</keyword>
<keyword id="KW-0694">RNA-binding</keyword>
<keyword id="KW-0699">rRNA-binding</keyword>
<dbReference type="EMBL" id="CP000733">
    <property type="protein sequence ID" value="ABS77489.1"/>
    <property type="molecule type" value="Genomic_DNA"/>
</dbReference>
<dbReference type="RefSeq" id="WP_005771523.1">
    <property type="nucleotide sequence ID" value="NC_009727.1"/>
</dbReference>
<dbReference type="SMR" id="A9KD20"/>
<dbReference type="KEGG" id="cbd:CBUD_1843"/>
<dbReference type="HOGENOM" id="CLU_093315_2_2_6"/>
<dbReference type="Proteomes" id="UP000008555">
    <property type="component" value="Chromosome"/>
</dbReference>
<dbReference type="GO" id="GO:1990904">
    <property type="term" value="C:ribonucleoprotein complex"/>
    <property type="evidence" value="ECO:0007669"/>
    <property type="project" value="UniProtKB-KW"/>
</dbReference>
<dbReference type="GO" id="GO:0005840">
    <property type="term" value="C:ribosome"/>
    <property type="evidence" value="ECO:0007669"/>
    <property type="project" value="UniProtKB-KW"/>
</dbReference>
<dbReference type="GO" id="GO:0019843">
    <property type="term" value="F:rRNA binding"/>
    <property type="evidence" value="ECO:0007669"/>
    <property type="project" value="UniProtKB-UniRule"/>
</dbReference>
<dbReference type="GO" id="GO:0003735">
    <property type="term" value="F:structural constituent of ribosome"/>
    <property type="evidence" value="ECO:0007669"/>
    <property type="project" value="InterPro"/>
</dbReference>
<dbReference type="GO" id="GO:0006412">
    <property type="term" value="P:translation"/>
    <property type="evidence" value="ECO:0007669"/>
    <property type="project" value="UniProtKB-UniRule"/>
</dbReference>
<dbReference type="CDD" id="cd06089">
    <property type="entry name" value="KOW_RPL26"/>
    <property type="match status" value="1"/>
</dbReference>
<dbReference type="FunFam" id="2.30.30.30:FF:000004">
    <property type="entry name" value="50S ribosomal protein L24"/>
    <property type="match status" value="1"/>
</dbReference>
<dbReference type="Gene3D" id="2.30.30.30">
    <property type="match status" value="1"/>
</dbReference>
<dbReference type="HAMAP" id="MF_01326_B">
    <property type="entry name" value="Ribosomal_uL24_B"/>
    <property type="match status" value="1"/>
</dbReference>
<dbReference type="InterPro" id="IPR005824">
    <property type="entry name" value="KOW"/>
</dbReference>
<dbReference type="InterPro" id="IPR014722">
    <property type="entry name" value="Rib_uL2_dom2"/>
</dbReference>
<dbReference type="InterPro" id="IPR003256">
    <property type="entry name" value="Ribosomal_uL24"/>
</dbReference>
<dbReference type="InterPro" id="IPR005825">
    <property type="entry name" value="Ribosomal_uL24_CS"/>
</dbReference>
<dbReference type="InterPro" id="IPR041988">
    <property type="entry name" value="Ribosomal_uL24_KOW"/>
</dbReference>
<dbReference type="InterPro" id="IPR008991">
    <property type="entry name" value="Translation_prot_SH3-like_sf"/>
</dbReference>
<dbReference type="NCBIfam" id="TIGR01079">
    <property type="entry name" value="rplX_bact"/>
    <property type="match status" value="1"/>
</dbReference>
<dbReference type="PANTHER" id="PTHR12903">
    <property type="entry name" value="MITOCHONDRIAL RIBOSOMAL PROTEIN L24"/>
    <property type="match status" value="1"/>
</dbReference>
<dbReference type="Pfam" id="PF00467">
    <property type="entry name" value="KOW"/>
    <property type="match status" value="1"/>
</dbReference>
<dbReference type="Pfam" id="PF17136">
    <property type="entry name" value="ribosomal_L24"/>
    <property type="match status" value="1"/>
</dbReference>
<dbReference type="SMART" id="SM00739">
    <property type="entry name" value="KOW"/>
    <property type="match status" value="1"/>
</dbReference>
<dbReference type="SUPFAM" id="SSF50104">
    <property type="entry name" value="Translation proteins SH3-like domain"/>
    <property type="match status" value="1"/>
</dbReference>
<dbReference type="PROSITE" id="PS01108">
    <property type="entry name" value="RIBOSOMAL_L24"/>
    <property type="match status" value="1"/>
</dbReference>
<protein>
    <recommendedName>
        <fullName evidence="1">Large ribosomal subunit protein uL24</fullName>
    </recommendedName>
    <alternativeName>
        <fullName evidence="2">50S ribosomal protein L24</fullName>
    </alternativeName>
</protein>
<comment type="function">
    <text evidence="1">One of two assembly initiator proteins, it binds directly to the 5'-end of the 23S rRNA, where it nucleates assembly of the 50S subunit.</text>
</comment>
<comment type="function">
    <text evidence="1">One of the proteins that surrounds the polypeptide exit tunnel on the outside of the subunit.</text>
</comment>
<comment type="subunit">
    <text evidence="1">Part of the 50S ribosomal subunit.</text>
</comment>
<comment type="similarity">
    <text evidence="1">Belongs to the universal ribosomal protein uL24 family.</text>
</comment>
<organism>
    <name type="scientific">Coxiella burnetii (strain Dugway 5J108-111)</name>
    <dbReference type="NCBI Taxonomy" id="434922"/>
    <lineage>
        <taxon>Bacteria</taxon>
        <taxon>Pseudomonadati</taxon>
        <taxon>Pseudomonadota</taxon>
        <taxon>Gammaproteobacteria</taxon>
        <taxon>Legionellales</taxon>
        <taxon>Coxiellaceae</taxon>
        <taxon>Coxiella</taxon>
    </lineage>
</organism>
<proteinExistence type="inferred from homology"/>
<gene>
    <name evidence="1" type="primary">rplX</name>
    <name type="ordered locus">CBUD_1843</name>
</gene>
<accession>A9KD20</accession>
<reference key="1">
    <citation type="journal article" date="2009" name="Infect. Immun.">
        <title>Comparative genomics reveal extensive transposon-mediated genomic plasticity and diversity among potential effector proteins within the genus Coxiella.</title>
        <authorList>
            <person name="Beare P.A."/>
            <person name="Unsworth N."/>
            <person name="Andoh M."/>
            <person name="Voth D.E."/>
            <person name="Omsland A."/>
            <person name="Gilk S.D."/>
            <person name="Williams K.P."/>
            <person name="Sobral B.W."/>
            <person name="Kupko J.J. III"/>
            <person name="Porcella S.F."/>
            <person name="Samuel J.E."/>
            <person name="Heinzen R.A."/>
        </authorList>
    </citation>
    <scope>NUCLEOTIDE SEQUENCE [LARGE SCALE GENOMIC DNA]</scope>
    <source>
        <strain>Dugway 5J108-111</strain>
    </source>
</reference>